<accession>A3DAS7</accession>
<proteinExistence type="inferred from homology"/>
<reference key="1">
    <citation type="submission" date="2007-02" db="EMBL/GenBank/DDBJ databases">
        <title>Complete sequence of chromosome of Shewanella baltica OS155.</title>
        <authorList>
            <consortium name="US DOE Joint Genome Institute"/>
            <person name="Copeland A."/>
            <person name="Lucas S."/>
            <person name="Lapidus A."/>
            <person name="Barry K."/>
            <person name="Detter J.C."/>
            <person name="Glavina del Rio T."/>
            <person name="Hammon N."/>
            <person name="Israni S."/>
            <person name="Dalin E."/>
            <person name="Tice H."/>
            <person name="Pitluck S."/>
            <person name="Sims D.R."/>
            <person name="Brettin T."/>
            <person name="Bruce D."/>
            <person name="Han C."/>
            <person name="Tapia R."/>
            <person name="Brainard J."/>
            <person name="Schmutz J."/>
            <person name="Larimer F."/>
            <person name="Land M."/>
            <person name="Hauser L."/>
            <person name="Kyrpides N."/>
            <person name="Mikhailova N."/>
            <person name="Brettar I."/>
            <person name="Klappenbach J."/>
            <person name="Konstantinidis K."/>
            <person name="Rodrigues J."/>
            <person name="Tiedje J."/>
            <person name="Richardson P."/>
        </authorList>
    </citation>
    <scope>NUCLEOTIDE SEQUENCE [LARGE SCALE GENOMIC DNA]</scope>
    <source>
        <strain>OS155 / ATCC BAA-1091</strain>
    </source>
</reference>
<protein>
    <recommendedName>
        <fullName evidence="1">tRNA modification GTPase MnmE</fullName>
        <ecNumber evidence="1">3.6.-.-</ecNumber>
    </recommendedName>
</protein>
<keyword id="KW-0963">Cytoplasm</keyword>
<keyword id="KW-0342">GTP-binding</keyword>
<keyword id="KW-0378">Hydrolase</keyword>
<keyword id="KW-0460">Magnesium</keyword>
<keyword id="KW-0479">Metal-binding</keyword>
<keyword id="KW-0547">Nucleotide-binding</keyword>
<keyword id="KW-0630">Potassium</keyword>
<keyword id="KW-1185">Reference proteome</keyword>
<keyword id="KW-0819">tRNA processing</keyword>
<sequence>MTTDTIVAQATAPGRGGVGIIRISGDKASNVAMAVLGHLPKTRYADYCDFKSASGQVIDQGIALFFKGPNSFTGEDVLELQGHGGQIVLDMLIKRVMEVGGIRIAKPGEFSEQAFMNDKLDLTQAEAIADLIDATCEQAAKSALQSLQGEFSKEVHELVDQVTNLRLYVEAAIDFPDEEVDFLSDGKIANALYKIIDKLDLVQASAKQGSIIREGMKVVIAGRPNAGKSSLLNALAGKESAIVTEIAGTTRDVLREHIHLDGMPLHIIDTAGLRDTTDTVEQIGIERAWNEINSADRVLFMVDGTTTAAVDPHAIWPDFVDRLPSNLGVTVIRNKADLTGEDLMMTEEQGYSVYRISAKTGLGVEELKQHLKSLMGYQSNLEGGFIARRRHLEALELAAGHLQLGKEQLEVYLAGELLAEELRMCQLALSEITGRFTSDDLLGKIFSSFCIGK</sequence>
<gene>
    <name evidence="1" type="primary">mnmE</name>
    <name evidence="1" type="synonym">trmE</name>
    <name type="ordered locus">Sbal_4379</name>
</gene>
<dbReference type="EC" id="3.6.-.-" evidence="1"/>
<dbReference type="EMBL" id="CP000563">
    <property type="protein sequence ID" value="ABN63840.1"/>
    <property type="status" value="ALT_INIT"/>
    <property type="molecule type" value="Genomic_DNA"/>
</dbReference>
<dbReference type="RefSeq" id="WP_041409214.1">
    <property type="nucleotide sequence ID" value="NC_009052.1"/>
</dbReference>
<dbReference type="SMR" id="A3DAS7"/>
<dbReference type="STRING" id="325240.Sbal_4379"/>
<dbReference type="KEGG" id="sbl:Sbal_4379"/>
<dbReference type="HOGENOM" id="CLU_019624_4_1_6"/>
<dbReference type="OrthoDB" id="9805918at2"/>
<dbReference type="Proteomes" id="UP000001557">
    <property type="component" value="Chromosome"/>
</dbReference>
<dbReference type="GO" id="GO:0005829">
    <property type="term" value="C:cytosol"/>
    <property type="evidence" value="ECO:0007669"/>
    <property type="project" value="TreeGrafter"/>
</dbReference>
<dbReference type="GO" id="GO:0005525">
    <property type="term" value="F:GTP binding"/>
    <property type="evidence" value="ECO:0007669"/>
    <property type="project" value="UniProtKB-UniRule"/>
</dbReference>
<dbReference type="GO" id="GO:0003924">
    <property type="term" value="F:GTPase activity"/>
    <property type="evidence" value="ECO:0007669"/>
    <property type="project" value="UniProtKB-UniRule"/>
</dbReference>
<dbReference type="GO" id="GO:0046872">
    <property type="term" value="F:metal ion binding"/>
    <property type="evidence" value="ECO:0007669"/>
    <property type="project" value="UniProtKB-KW"/>
</dbReference>
<dbReference type="GO" id="GO:0030488">
    <property type="term" value="P:tRNA methylation"/>
    <property type="evidence" value="ECO:0007669"/>
    <property type="project" value="TreeGrafter"/>
</dbReference>
<dbReference type="GO" id="GO:0002098">
    <property type="term" value="P:tRNA wobble uridine modification"/>
    <property type="evidence" value="ECO:0007669"/>
    <property type="project" value="TreeGrafter"/>
</dbReference>
<dbReference type="CDD" id="cd04164">
    <property type="entry name" value="trmE"/>
    <property type="match status" value="1"/>
</dbReference>
<dbReference type="CDD" id="cd14858">
    <property type="entry name" value="TrmE_N"/>
    <property type="match status" value="1"/>
</dbReference>
<dbReference type="FunFam" id="3.30.1360.120:FF:000001">
    <property type="entry name" value="tRNA modification GTPase MnmE"/>
    <property type="match status" value="1"/>
</dbReference>
<dbReference type="FunFam" id="3.40.50.300:FF:000249">
    <property type="entry name" value="tRNA modification GTPase MnmE"/>
    <property type="match status" value="1"/>
</dbReference>
<dbReference type="Gene3D" id="3.40.50.300">
    <property type="entry name" value="P-loop containing nucleotide triphosphate hydrolases"/>
    <property type="match status" value="1"/>
</dbReference>
<dbReference type="Gene3D" id="3.30.1360.120">
    <property type="entry name" value="Probable tRNA modification gtpase trme, domain 1"/>
    <property type="match status" value="1"/>
</dbReference>
<dbReference type="Gene3D" id="1.20.120.430">
    <property type="entry name" value="tRNA modification GTPase MnmE domain 2"/>
    <property type="match status" value="1"/>
</dbReference>
<dbReference type="HAMAP" id="MF_00379">
    <property type="entry name" value="GTPase_MnmE"/>
    <property type="match status" value="1"/>
</dbReference>
<dbReference type="InterPro" id="IPR031168">
    <property type="entry name" value="G_TrmE"/>
</dbReference>
<dbReference type="InterPro" id="IPR006073">
    <property type="entry name" value="GTP-bd"/>
</dbReference>
<dbReference type="InterPro" id="IPR018948">
    <property type="entry name" value="GTP-bd_TrmE_N"/>
</dbReference>
<dbReference type="InterPro" id="IPR004520">
    <property type="entry name" value="GTPase_MnmE"/>
</dbReference>
<dbReference type="InterPro" id="IPR027368">
    <property type="entry name" value="MnmE_dom2"/>
</dbReference>
<dbReference type="InterPro" id="IPR025867">
    <property type="entry name" value="MnmE_helical"/>
</dbReference>
<dbReference type="InterPro" id="IPR027417">
    <property type="entry name" value="P-loop_NTPase"/>
</dbReference>
<dbReference type="InterPro" id="IPR005225">
    <property type="entry name" value="Small_GTP-bd"/>
</dbReference>
<dbReference type="InterPro" id="IPR027266">
    <property type="entry name" value="TrmE/GcvT_dom1"/>
</dbReference>
<dbReference type="NCBIfam" id="TIGR00450">
    <property type="entry name" value="mnmE_trmE_thdF"/>
    <property type="match status" value="1"/>
</dbReference>
<dbReference type="NCBIfam" id="NF003661">
    <property type="entry name" value="PRK05291.1-3"/>
    <property type="match status" value="1"/>
</dbReference>
<dbReference type="NCBIfam" id="TIGR00231">
    <property type="entry name" value="small_GTP"/>
    <property type="match status" value="1"/>
</dbReference>
<dbReference type="PANTHER" id="PTHR42714">
    <property type="entry name" value="TRNA MODIFICATION GTPASE GTPBP3"/>
    <property type="match status" value="1"/>
</dbReference>
<dbReference type="PANTHER" id="PTHR42714:SF2">
    <property type="entry name" value="TRNA MODIFICATION GTPASE GTPBP3, MITOCHONDRIAL"/>
    <property type="match status" value="1"/>
</dbReference>
<dbReference type="Pfam" id="PF01926">
    <property type="entry name" value="MMR_HSR1"/>
    <property type="match status" value="1"/>
</dbReference>
<dbReference type="Pfam" id="PF12631">
    <property type="entry name" value="MnmE_helical"/>
    <property type="match status" value="1"/>
</dbReference>
<dbReference type="Pfam" id="PF10396">
    <property type="entry name" value="TrmE_N"/>
    <property type="match status" value="1"/>
</dbReference>
<dbReference type="SUPFAM" id="SSF52540">
    <property type="entry name" value="P-loop containing nucleoside triphosphate hydrolases"/>
    <property type="match status" value="1"/>
</dbReference>
<dbReference type="SUPFAM" id="SSF116878">
    <property type="entry name" value="TrmE connector domain"/>
    <property type="match status" value="1"/>
</dbReference>
<dbReference type="PROSITE" id="PS51709">
    <property type="entry name" value="G_TRME"/>
    <property type="match status" value="1"/>
</dbReference>
<feature type="chain" id="PRO_0000345902" description="tRNA modification GTPase MnmE">
    <location>
        <begin position="1"/>
        <end position="453"/>
    </location>
</feature>
<feature type="domain" description="TrmE-type G">
    <location>
        <begin position="215"/>
        <end position="376"/>
    </location>
</feature>
<feature type="binding site" evidence="1">
    <location>
        <position position="22"/>
    </location>
    <ligand>
        <name>(6S)-5-formyl-5,6,7,8-tetrahydrofolate</name>
        <dbReference type="ChEBI" id="CHEBI:57457"/>
    </ligand>
</feature>
<feature type="binding site" evidence="1">
    <location>
        <position position="79"/>
    </location>
    <ligand>
        <name>(6S)-5-formyl-5,6,7,8-tetrahydrofolate</name>
        <dbReference type="ChEBI" id="CHEBI:57457"/>
    </ligand>
</feature>
<feature type="binding site" evidence="1">
    <location>
        <position position="119"/>
    </location>
    <ligand>
        <name>(6S)-5-formyl-5,6,7,8-tetrahydrofolate</name>
        <dbReference type="ChEBI" id="CHEBI:57457"/>
    </ligand>
</feature>
<feature type="binding site" evidence="1">
    <location>
        <begin position="225"/>
        <end position="230"/>
    </location>
    <ligand>
        <name>GTP</name>
        <dbReference type="ChEBI" id="CHEBI:37565"/>
    </ligand>
</feature>
<feature type="binding site" evidence="1">
    <location>
        <position position="225"/>
    </location>
    <ligand>
        <name>K(+)</name>
        <dbReference type="ChEBI" id="CHEBI:29103"/>
    </ligand>
</feature>
<feature type="binding site" evidence="1">
    <location>
        <position position="229"/>
    </location>
    <ligand>
        <name>Mg(2+)</name>
        <dbReference type="ChEBI" id="CHEBI:18420"/>
    </ligand>
</feature>
<feature type="binding site" evidence="1">
    <location>
        <begin position="244"/>
        <end position="250"/>
    </location>
    <ligand>
        <name>GTP</name>
        <dbReference type="ChEBI" id="CHEBI:37565"/>
    </ligand>
</feature>
<feature type="binding site" evidence="1">
    <location>
        <position position="244"/>
    </location>
    <ligand>
        <name>K(+)</name>
        <dbReference type="ChEBI" id="CHEBI:29103"/>
    </ligand>
</feature>
<feature type="binding site" evidence="1">
    <location>
        <position position="246"/>
    </location>
    <ligand>
        <name>K(+)</name>
        <dbReference type="ChEBI" id="CHEBI:29103"/>
    </ligand>
</feature>
<feature type="binding site" evidence="1">
    <location>
        <position position="249"/>
    </location>
    <ligand>
        <name>K(+)</name>
        <dbReference type="ChEBI" id="CHEBI:29103"/>
    </ligand>
</feature>
<feature type="binding site" evidence="1">
    <location>
        <position position="250"/>
    </location>
    <ligand>
        <name>Mg(2+)</name>
        <dbReference type="ChEBI" id="CHEBI:18420"/>
    </ligand>
</feature>
<feature type="binding site" evidence="1">
    <location>
        <begin position="269"/>
        <end position="272"/>
    </location>
    <ligand>
        <name>GTP</name>
        <dbReference type="ChEBI" id="CHEBI:37565"/>
    </ligand>
</feature>
<feature type="binding site" evidence="1">
    <location>
        <begin position="334"/>
        <end position="337"/>
    </location>
    <ligand>
        <name>GTP</name>
        <dbReference type="ChEBI" id="CHEBI:37565"/>
    </ligand>
</feature>
<feature type="binding site" evidence="1">
    <location>
        <position position="453"/>
    </location>
    <ligand>
        <name>(6S)-5-formyl-5,6,7,8-tetrahydrofolate</name>
        <dbReference type="ChEBI" id="CHEBI:57457"/>
    </ligand>
</feature>
<evidence type="ECO:0000255" key="1">
    <source>
        <dbReference type="HAMAP-Rule" id="MF_00379"/>
    </source>
</evidence>
<evidence type="ECO:0000305" key="2"/>
<organism>
    <name type="scientific">Shewanella baltica (strain OS155 / ATCC BAA-1091)</name>
    <dbReference type="NCBI Taxonomy" id="325240"/>
    <lineage>
        <taxon>Bacteria</taxon>
        <taxon>Pseudomonadati</taxon>
        <taxon>Pseudomonadota</taxon>
        <taxon>Gammaproteobacteria</taxon>
        <taxon>Alteromonadales</taxon>
        <taxon>Shewanellaceae</taxon>
        <taxon>Shewanella</taxon>
    </lineage>
</organism>
<comment type="function">
    <text evidence="1">Exhibits a very high intrinsic GTPase hydrolysis rate. Involved in the addition of a carboxymethylaminomethyl (cmnm) group at the wobble position (U34) of certain tRNAs, forming tRNA-cmnm(5)s(2)U34.</text>
</comment>
<comment type="cofactor">
    <cofactor evidence="1">
        <name>K(+)</name>
        <dbReference type="ChEBI" id="CHEBI:29103"/>
    </cofactor>
    <text evidence="1">Binds 1 potassium ion per subunit.</text>
</comment>
<comment type="subunit">
    <text evidence="1">Homodimer. Heterotetramer of two MnmE and two MnmG subunits.</text>
</comment>
<comment type="subcellular location">
    <subcellularLocation>
        <location evidence="1">Cytoplasm</location>
    </subcellularLocation>
</comment>
<comment type="similarity">
    <text evidence="1">Belongs to the TRAFAC class TrmE-Era-EngA-EngB-Septin-like GTPase superfamily. TrmE GTPase family.</text>
</comment>
<comment type="sequence caution" evidence="2">
    <conflict type="erroneous initiation">
        <sequence resource="EMBL-CDS" id="ABN63840"/>
    </conflict>
</comment>
<name>MNME_SHEB5</name>